<proteinExistence type="inferred from homology"/>
<protein>
    <recommendedName>
        <fullName evidence="1">Aspartate 1-decarboxylase</fullName>
        <ecNumber evidence="1">4.1.1.11</ecNumber>
    </recommendedName>
    <alternativeName>
        <fullName evidence="1">Aspartate alpha-decarboxylase</fullName>
    </alternativeName>
    <component>
        <recommendedName>
            <fullName evidence="1">Aspartate 1-decarboxylase beta chain</fullName>
        </recommendedName>
    </component>
    <component>
        <recommendedName>
            <fullName evidence="1">Aspartate 1-decarboxylase alpha chain</fullName>
        </recommendedName>
    </component>
</protein>
<reference key="1">
    <citation type="journal article" date="2010" name="Genome Biol. Evol.">
        <title>Continuing evolution of Burkholderia mallei through genome reduction and large-scale rearrangements.</title>
        <authorList>
            <person name="Losada L."/>
            <person name="Ronning C.M."/>
            <person name="DeShazer D."/>
            <person name="Woods D."/>
            <person name="Fedorova N."/>
            <person name="Kim H.S."/>
            <person name="Shabalina S.A."/>
            <person name="Pearson T.R."/>
            <person name="Brinkac L."/>
            <person name="Tan P."/>
            <person name="Nandi T."/>
            <person name="Crabtree J."/>
            <person name="Badger J."/>
            <person name="Beckstrom-Sternberg S."/>
            <person name="Saqib M."/>
            <person name="Schutzer S.E."/>
            <person name="Keim P."/>
            <person name="Nierman W.C."/>
        </authorList>
    </citation>
    <scope>NUCLEOTIDE SEQUENCE [LARGE SCALE GENOMIC DNA]</scope>
    <source>
        <strain>1710b</strain>
    </source>
</reference>
<organism>
    <name type="scientific">Burkholderia pseudomallei (strain 1710b)</name>
    <dbReference type="NCBI Taxonomy" id="320372"/>
    <lineage>
        <taxon>Bacteria</taxon>
        <taxon>Pseudomonadati</taxon>
        <taxon>Pseudomonadota</taxon>
        <taxon>Betaproteobacteria</taxon>
        <taxon>Burkholderiales</taxon>
        <taxon>Burkholderiaceae</taxon>
        <taxon>Burkholderia</taxon>
        <taxon>pseudomallei group</taxon>
    </lineage>
</organism>
<comment type="function">
    <text evidence="1">Catalyzes the pyruvoyl-dependent decarboxylation of aspartate to produce beta-alanine.</text>
</comment>
<comment type="catalytic activity">
    <reaction evidence="1">
        <text>L-aspartate + H(+) = beta-alanine + CO2</text>
        <dbReference type="Rhea" id="RHEA:19497"/>
        <dbReference type="ChEBI" id="CHEBI:15378"/>
        <dbReference type="ChEBI" id="CHEBI:16526"/>
        <dbReference type="ChEBI" id="CHEBI:29991"/>
        <dbReference type="ChEBI" id="CHEBI:57966"/>
        <dbReference type="EC" id="4.1.1.11"/>
    </reaction>
</comment>
<comment type="cofactor">
    <cofactor evidence="1">
        <name>pyruvate</name>
        <dbReference type="ChEBI" id="CHEBI:15361"/>
    </cofactor>
    <text evidence="1">Binds 1 pyruvoyl group covalently per subunit.</text>
</comment>
<comment type="pathway">
    <text evidence="1">Cofactor biosynthesis; (R)-pantothenate biosynthesis; beta-alanine from L-aspartate: step 1/1.</text>
</comment>
<comment type="subunit">
    <text evidence="1">Heterooctamer of four alpha and four beta subunits.</text>
</comment>
<comment type="subcellular location">
    <subcellularLocation>
        <location evidence="1">Cytoplasm</location>
    </subcellularLocation>
</comment>
<comment type="PTM">
    <text evidence="1">Is synthesized initially as an inactive proenzyme, which is activated by self-cleavage at a specific serine bond to produce a beta-subunit with a hydroxyl group at its C-terminus and an alpha-subunit with a pyruvoyl group at its N-terminus.</text>
</comment>
<comment type="similarity">
    <text evidence="1">Belongs to the PanD family.</text>
</comment>
<evidence type="ECO:0000255" key="1">
    <source>
        <dbReference type="HAMAP-Rule" id="MF_00446"/>
    </source>
</evidence>
<feature type="chain" id="PRO_0000236853" description="Aspartate 1-decarboxylase beta chain" evidence="1">
    <location>
        <begin position="1"/>
        <end position="24"/>
    </location>
</feature>
<feature type="chain" id="PRO_0000236854" description="Aspartate 1-decarboxylase alpha chain" evidence="1">
    <location>
        <begin position="25"/>
        <end position="128"/>
    </location>
</feature>
<feature type="active site" description="Schiff-base intermediate with substrate; via pyruvic acid" evidence="1">
    <location>
        <position position="25"/>
    </location>
</feature>
<feature type="active site" description="Proton donor" evidence="1">
    <location>
        <position position="58"/>
    </location>
</feature>
<feature type="binding site" evidence="1">
    <location>
        <position position="57"/>
    </location>
    <ligand>
        <name>substrate</name>
    </ligand>
</feature>
<feature type="binding site" evidence="1">
    <location>
        <begin position="73"/>
        <end position="75"/>
    </location>
    <ligand>
        <name>substrate</name>
    </ligand>
</feature>
<feature type="modified residue" description="Pyruvic acid (Ser)" evidence="1">
    <location>
        <position position="25"/>
    </location>
</feature>
<gene>
    <name evidence="1" type="primary">panD</name>
    <name type="ordered locus">BURPS1710b_1203</name>
</gene>
<name>PAND_BURP1</name>
<accession>Q3JUY9</accession>
<dbReference type="EC" id="4.1.1.11" evidence="1"/>
<dbReference type="EMBL" id="CP000124">
    <property type="protein sequence ID" value="ABA48761.1"/>
    <property type="molecule type" value="Genomic_DNA"/>
</dbReference>
<dbReference type="RefSeq" id="WP_004191357.1">
    <property type="nucleotide sequence ID" value="NC_007434.1"/>
</dbReference>
<dbReference type="SMR" id="Q3JUY9"/>
<dbReference type="EnsemblBacteria" id="ABA48761">
    <property type="protein sequence ID" value="ABA48761"/>
    <property type="gene ID" value="BURPS1710b_1203"/>
</dbReference>
<dbReference type="GeneID" id="92978462"/>
<dbReference type="KEGG" id="bpm:BURPS1710b_1203"/>
<dbReference type="HOGENOM" id="CLU_115305_2_1_4"/>
<dbReference type="UniPathway" id="UPA00028">
    <property type="reaction ID" value="UER00002"/>
</dbReference>
<dbReference type="Proteomes" id="UP000002700">
    <property type="component" value="Chromosome I"/>
</dbReference>
<dbReference type="GO" id="GO:0005829">
    <property type="term" value="C:cytosol"/>
    <property type="evidence" value="ECO:0007669"/>
    <property type="project" value="TreeGrafter"/>
</dbReference>
<dbReference type="GO" id="GO:0004068">
    <property type="term" value="F:aspartate 1-decarboxylase activity"/>
    <property type="evidence" value="ECO:0007669"/>
    <property type="project" value="UniProtKB-UniRule"/>
</dbReference>
<dbReference type="GO" id="GO:0006523">
    <property type="term" value="P:alanine biosynthetic process"/>
    <property type="evidence" value="ECO:0007669"/>
    <property type="project" value="InterPro"/>
</dbReference>
<dbReference type="GO" id="GO:0015940">
    <property type="term" value="P:pantothenate biosynthetic process"/>
    <property type="evidence" value="ECO:0007669"/>
    <property type="project" value="UniProtKB-UniRule"/>
</dbReference>
<dbReference type="CDD" id="cd06919">
    <property type="entry name" value="Asp_decarbox"/>
    <property type="match status" value="1"/>
</dbReference>
<dbReference type="Gene3D" id="2.40.40.20">
    <property type="match status" value="1"/>
</dbReference>
<dbReference type="HAMAP" id="MF_00446">
    <property type="entry name" value="PanD"/>
    <property type="match status" value="1"/>
</dbReference>
<dbReference type="InterPro" id="IPR009010">
    <property type="entry name" value="Asp_de-COase-like_dom_sf"/>
</dbReference>
<dbReference type="InterPro" id="IPR003190">
    <property type="entry name" value="Asp_decarbox"/>
</dbReference>
<dbReference type="NCBIfam" id="TIGR00223">
    <property type="entry name" value="panD"/>
    <property type="match status" value="1"/>
</dbReference>
<dbReference type="PANTHER" id="PTHR21012">
    <property type="entry name" value="ASPARTATE 1-DECARBOXYLASE"/>
    <property type="match status" value="1"/>
</dbReference>
<dbReference type="PANTHER" id="PTHR21012:SF0">
    <property type="entry name" value="ASPARTATE 1-DECARBOXYLASE"/>
    <property type="match status" value="1"/>
</dbReference>
<dbReference type="Pfam" id="PF02261">
    <property type="entry name" value="Asp_decarbox"/>
    <property type="match status" value="1"/>
</dbReference>
<dbReference type="PIRSF" id="PIRSF006246">
    <property type="entry name" value="Asp_decarbox"/>
    <property type="match status" value="1"/>
</dbReference>
<dbReference type="SUPFAM" id="SSF50692">
    <property type="entry name" value="ADC-like"/>
    <property type="match status" value="1"/>
</dbReference>
<sequence>MQRHMLKSKIHRAAVTHCELHYEGSCAIDEDLLEAANIVENERIDIWNVNNGERFSTYAIKGERGSGMISLNGSAARRAQLGDLVIIAAFAMIDEQELKAGWKPDLVFVDEDNKIKGSRDHVPTQNWT</sequence>
<keyword id="KW-0068">Autocatalytic cleavage</keyword>
<keyword id="KW-0963">Cytoplasm</keyword>
<keyword id="KW-0210">Decarboxylase</keyword>
<keyword id="KW-0456">Lyase</keyword>
<keyword id="KW-0566">Pantothenate biosynthesis</keyword>
<keyword id="KW-0670">Pyruvate</keyword>
<keyword id="KW-0704">Schiff base</keyword>
<keyword id="KW-0865">Zymogen</keyword>